<organism>
    <name type="scientific">Salmonella gallinarum (strain 287/91 / NCTC 13346)</name>
    <dbReference type="NCBI Taxonomy" id="550538"/>
    <lineage>
        <taxon>Bacteria</taxon>
        <taxon>Pseudomonadati</taxon>
        <taxon>Pseudomonadota</taxon>
        <taxon>Gammaproteobacteria</taxon>
        <taxon>Enterobacterales</taxon>
        <taxon>Enterobacteriaceae</taxon>
        <taxon>Salmonella</taxon>
    </lineage>
</organism>
<proteinExistence type="inferred from homology"/>
<gene>
    <name evidence="1" type="primary">mukF</name>
    <name type="ordered locus">SG0934</name>
</gene>
<dbReference type="EMBL" id="AM933173">
    <property type="protein sequence ID" value="CAR36824.1"/>
    <property type="molecule type" value="Genomic_DNA"/>
</dbReference>
<dbReference type="RefSeq" id="WP_001288832.1">
    <property type="nucleotide sequence ID" value="NC_011274.1"/>
</dbReference>
<dbReference type="SMR" id="B5R8K9"/>
<dbReference type="KEGG" id="seg:SG0934"/>
<dbReference type="HOGENOM" id="CLU_049853_0_0_6"/>
<dbReference type="Proteomes" id="UP000008321">
    <property type="component" value="Chromosome"/>
</dbReference>
<dbReference type="GO" id="GO:0005737">
    <property type="term" value="C:cytoplasm"/>
    <property type="evidence" value="ECO:0007669"/>
    <property type="project" value="UniProtKB-UniRule"/>
</dbReference>
<dbReference type="GO" id="GO:0009295">
    <property type="term" value="C:nucleoid"/>
    <property type="evidence" value="ECO:0007669"/>
    <property type="project" value="UniProtKB-SubCell"/>
</dbReference>
<dbReference type="GO" id="GO:0005509">
    <property type="term" value="F:calcium ion binding"/>
    <property type="evidence" value="ECO:0007669"/>
    <property type="project" value="UniProtKB-UniRule"/>
</dbReference>
<dbReference type="GO" id="GO:0051301">
    <property type="term" value="P:cell division"/>
    <property type="evidence" value="ECO:0007669"/>
    <property type="project" value="UniProtKB-KW"/>
</dbReference>
<dbReference type="GO" id="GO:0030261">
    <property type="term" value="P:chromosome condensation"/>
    <property type="evidence" value="ECO:0007669"/>
    <property type="project" value="UniProtKB-KW"/>
</dbReference>
<dbReference type="GO" id="GO:0007059">
    <property type="term" value="P:chromosome segregation"/>
    <property type="evidence" value="ECO:0007669"/>
    <property type="project" value="UniProtKB-UniRule"/>
</dbReference>
<dbReference type="GO" id="GO:0006260">
    <property type="term" value="P:DNA replication"/>
    <property type="evidence" value="ECO:0007669"/>
    <property type="project" value="UniProtKB-UniRule"/>
</dbReference>
<dbReference type="CDD" id="cd16337">
    <property type="entry name" value="MukF_C"/>
    <property type="match status" value="1"/>
</dbReference>
<dbReference type="CDD" id="cd16335">
    <property type="entry name" value="MukF_N"/>
    <property type="match status" value="1"/>
</dbReference>
<dbReference type="Gene3D" id="1.20.58.590">
    <property type="entry name" value="Chromosome partition protein MukF, middle domain"/>
    <property type="match status" value="1"/>
</dbReference>
<dbReference type="Gene3D" id="1.10.225.40">
    <property type="entry name" value="MukF, C-terminal domain"/>
    <property type="match status" value="1"/>
</dbReference>
<dbReference type="Gene3D" id="1.10.10.10">
    <property type="entry name" value="Winged helix-like DNA-binding domain superfamily/Winged helix DNA-binding domain"/>
    <property type="match status" value="1"/>
</dbReference>
<dbReference type="HAMAP" id="MF_01803">
    <property type="entry name" value="MukF"/>
    <property type="match status" value="1"/>
</dbReference>
<dbReference type="InterPro" id="IPR005582">
    <property type="entry name" value="Chromosome_partition_MukF"/>
</dbReference>
<dbReference type="InterPro" id="IPR033441">
    <property type="entry name" value="MukF_C"/>
</dbReference>
<dbReference type="InterPro" id="IPR038198">
    <property type="entry name" value="MukF_C_sf"/>
</dbReference>
<dbReference type="InterPro" id="IPR033440">
    <property type="entry name" value="MukF_M"/>
</dbReference>
<dbReference type="InterPro" id="IPR036141">
    <property type="entry name" value="MukF_M_sp"/>
</dbReference>
<dbReference type="InterPro" id="IPR033439">
    <property type="entry name" value="MukF_WHTH"/>
</dbReference>
<dbReference type="InterPro" id="IPR036388">
    <property type="entry name" value="WH-like_DNA-bd_sf"/>
</dbReference>
<dbReference type="InterPro" id="IPR036390">
    <property type="entry name" value="WH_DNA-bd_sf"/>
</dbReference>
<dbReference type="NCBIfam" id="NF003615">
    <property type="entry name" value="PRK05260.1"/>
    <property type="match status" value="1"/>
</dbReference>
<dbReference type="Pfam" id="PF03882">
    <property type="entry name" value="KicB"/>
    <property type="match status" value="1"/>
</dbReference>
<dbReference type="Pfam" id="PF17193">
    <property type="entry name" value="MukF_C"/>
    <property type="match status" value="1"/>
</dbReference>
<dbReference type="Pfam" id="PF17192">
    <property type="entry name" value="MukF_M"/>
    <property type="match status" value="1"/>
</dbReference>
<dbReference type="PIRSF" id="PIRSF018282">
    <property type="entry name" value="MukF"/>
    <property type="match status" value="1"/>
</dbReference>
<dbReference type="SUPFAM" id="SSF140570">
    <property type="entry name" value="MukF C-terminal domain-like"/>
    <property type="match status" value="1"/>
</dbReference>
<dbReference type="SUPFAM" id="SSF46785">
    <property type="entry name" value="Winged helix' DNA-binding domain"/>
    <property type="match status" value="1"/>
</dbReference>
<feature type="chain" id="PRO_1000187515" description="Chromosome partition protein MukF">
    <location>
        <begin position="1"/>
        <end position="440"/>
    </location>
</feature>
<feature type="region of interest" description="Leucine-zipper">
    <location>
        <begin position="208"/>
        <end position="236"/>
    </location>
</feature>
<protein>
    <recommendedName>
        <fullName evidence="1">Chromosome partition protein MukF</fullName>
    </recommendedName>
</protein>
<evidence type="ECO:0000255" key="1">
    <source>
        <dbReference type="HAMAP-Rule" id="MF_01803"/>
    </source>
</evidence>
<reference key="1">
    <citation type="journal article" date="2008" name="Genome Res.">
        <title>Comparative genome analysis of Salmonella enteritidis PT4 and Salmonella gallinarum 287/91 provides insights into evolutionary and host adaptation pathways.</title>
        <authorList>
            <person name="Thomson N.R."/>
            <person name="Clayton D.J."/>
            <person name="Windhorst D."/>
            <person name="Vernikos G."/>
            <person name="Davidson S."/>
            <person name="Churcher C."/>
            <person name="Quail M.A."/>
            <person name="Stevens M."/>
            <person name="Jones M.A."/>
            <person name="Watson M."/>
            <person name="Barron A."/>
            <person name="Layton A."/>
            <person name="Pickard D."/>
            <person name="Kingsley R.A."/>
            <person name="Bignell A."/>
            <person name="Clark L."/>
            <person name="Harris B."/>
            <person name="Ormond D."/>
            <person name="Abdellah Z."/>
            <person name="Brooks K."/>
            <person name="Cherevach I."/>
            <person name="Chillingworth T."/>
            <person name="Woodward J."/>
            <person name="Norberczak H."/>
            <person name="Lord A."/>
            <person name="Arrowsmith C."/>
            <person name="Jagels K."/>
            <person name="Moule S."/>
            <person name="Mungall K."/>
            <person name="Saunders M."/>
            <person name="Whitehead S."/>
            <person name="Chabalgoity J.A."/>
            <person name="Maskell D."/>
            <person name="Humphreys T."/>
            <person name="Roberts M."/>
            <person name="Barrow P.A."/>
            <person name="Dougan G."/>
            <person name="Parkhill J."/>
        </authorList>
    </citation>
    <scope>NUCLEOTIDE SEQUENCE [LARGE SCALE GENOMIC DNA]</scope>
    <source>
        <strain>287/91 / NCTC 13346</strain>
    </source>
</reference>
<sequence>MSEFSQTVPELVAWARKNDFSISLPVDRLSFLLAVATLNGERLDGEMSEGELVDAFRHVSDAFEQTSETIGVRANNAINDMVRQRLLNRFTSEQAEGNAIYRLTPLGIGITDYYIRQREFSTLRLSMQLSIVAGELKRAADAAAEGGDEFHWHRNVYAPLKYSVAEIFDSIDLTQRIMDEQQQQVKDDIAQLLNKDWRAAISSCELLLSETSGTLRELQDTLEAAGDKLQANLLRIQDATMTHDDLHVVDRLVFDLQSKLDRIISWGQQSIDLWIGYDRHVHKFIRTAIDMDKNRVFAQRLRQSVQTYFDDPWALTYANADRLLDMRDEEMALRDDEVTGEFPPDLEYEEFNEIREQLAAIIEEQLAIYKTRQTPLDLGLVVREYLAQYPRARHFDVARIVIDQAVRLGVAQADFTGLPAKWQPINDYGAKVQAHVIDKY</sequence>
<keyword id="KW-0106">Calcium</keyword>
<keyword id="KW-0131">Cell cycle</keyword>
<keyword id="KW-0132">Cell division</keyword>
<keyword id="KW-0159">Chromosome partition</keyword>
<keyword id="KW-0963">Cytoplasm</keyword>
<keyword id="KW-0226">DNA condensation</keyword>
<name>MUKF_SALG2</name>
<comment type="function">
    <text evidence="1">Involved in chromosome condensation, segregation and cell cycle progression. May participate in facilitating chromosome segregation by condensation DNA from both sides of a centrally located replisome during cell division. Not required for mini-F plasmid partitioning. Probably acts via its interaction with MukB and MukE. Overexpression results in anucleate cells. It has a calcium binding activity.</text>
</comment>
<comment type="subunit">
    <text evidence="1">Interacts, and probably forms a ternary complex, with MukE and MukB via its C-terminal region. The complex formation is stimulated by calcium or magnesium. It is required for an interaction between MukE and MukB.</text>
</comment>
<comment type="subcellular location">
    <subcellularLocation>
        <location evidence="1">Cytoplasm</location>
        <location evidence="1">Nucleoid</location>
    </subcellularLocation>
    <text evidence="1">Restricted to the nucleoid region.</text>
</comment>
<comment type="similarity">
    <text evidence="1">Belongs to the MukF family.</text>
</comment>
<accession>B5R8K9</accession>